<comment type="function">
    <text evidence="1">Catalyzes the initial step of the lipid cycle reactions in the biosynthesis of the cell wall peptidoglycan: transfers peptidoglycan precursor phospho-MurNAc-pentapeptide from UDP-MurNAc-pentapeptide onto the lipid carrier undecaprenyl phosphate, yielding undecaprenyl-pyrophosphoryl-MurNAc-pentapeptide, known as lipid I.</text>
</comment>
<comment type="catalytic activity">
    <reaction evidence="1">
        <text>UDP-N-acetyl-alpha-D-muramoyl-L-alanyl-gamma-D-glutamyl-L-lysyl-D-alanyl-D-alanine + di-trans,octa-cis-undecaprenyl phosphate = Mur2Ac(oyl-L-Ala-gamma-D-Glu-L-Lys-D-Ala-D-Ala)-di-trans,octa-cis-undecaprenyl diphosphate + UMP</text>
        <dbReference type="Rhea" id="RHEA:21920"/>
        <dbReference type="ChEBI" id="CHEBI:57865"/>
        <dbReference type="ChEBI" id="CHEBI:60032"/>
        <dbReference type="ChEBI" id="CHEBI:60392"/>
        <dbReference type="ChEBI" id="CHEBI:70758"/>
        <dbReference type="EC" id="2.7.8.13"/>
    </reaction>
</comment>
<comment type="cofactor">
    <cofactor evidence="1">
        <name>Mg(2+)</name>
        <dbReference type="ChEBI" id="CHEBI:18420"/>
    </cofactor>
</comment>
<comment type="pathway">
    <text evidence="1">Cell wall biogenesis; peptidoglycan biosynthesis.</text>
</comment>
<comment type="subcellular location">
    <subcellularLocation>
        <location evidence="1">Cell membrane</location>
        <topology evidence="1">Multi-pass membrane protein</topology>
    </subcellularLocation>
</comment>
<comment type="similarity">
    <text evidence="1">Belongs to the glycosyltransferase 4 family. MraY subfamily.</text>
</comment>
<dbReference type="EC" id="2.7.8.13" evidence="1"/>
<dbReference type="EMBL" id="AE015929">
    <property type="protein sequence ID" value="AAO04454.1"/>
    <property type="molecule type" value="Genomic_DNA"/>
</dbReference>
<dbReference type="RefSeq" id="NP_764412.1">
    <property type="nucleotide sequence ID" value="NC_004461.1"/>
</dbReference>
<dbReference type="RefSeq" id="WP_001830122.1">
    <property type="nucleotide sequence ID" value="NZ_WBME01000036.1"/>
</dbReference>
<dbReference type="SMR" id="Q8CPK7"/>
<dbReference type="GeneID" id="50019004"/>
<dbReference type="KEGG" id="sep:SE_0857"/>
<dbReference type="PATRIC" id="fig|176280.10.peg.830"/>
<dbReference type="eggNOG" id="COG0472">
    <property type="taxonomic scope" value="Bacteria"/>
</dbReference>
<dbReference type="HOGENOM" id="CLU_023982_0_1_9"/>
<dbReference type="OrthoDB" id="9805475at2"/>
<dbReference type="UniPathway" id="UPA00219"/>
<dbReference type="Proteomes" id="UP000001411">
    <property type="component" value="Chromosome"/>
</dbReference>
<dbReference type="GO" id="GO:0005886">
    <property type="term" value="C:plasma membrane"/>
    <property type="evidence" value="ECO:0007669"/>
    <property type="project" value="UniProtKB-SubCell"/>
</dbReference>
<dbReference type="GO" id="GO:0046872">
    <property type="term" value="F:metal ion binding"/>
    <property type="evidence" value="ECO:0007669"/>
    <property type="project" value="UniProtKB-KW"/>
</dbReference>
<dbReference type="GO" id="GO:0008963">
    <property type="term" value="F:phospho-N-acetylmuramoyl-pentapeptide-transferase activity"/>
    <property type="evidence" value="ECO:0007669"/>
    <property type="project" value="UniProtKB-UniRule"/>
</dbReference>
<dbReference type="GO" id="GO:0051301">
    <property type="term" value="P:cell division"/>
    <property type="evidence" value="ECO:0007669"/>
    <property type="project" value="UniProtKB-KW"/>
</dbReference>
<dbReference type="GO" id="GO:0071555">
    <property type="term" value="P:cell wall organization"/>
    <property type="evidence" value="ECO:0007669"/>
    <property type="project" value="UniProtKB-KW"/>
</dbReference>
<dbReference type="GO" id="GO:0009252">
    <property type="term" value="P:peptidoglycan biosynthetic process"/>
    <property type="evidence" value="ECO:0007669"/>
    <property type="project" value="UniProtKB-UniRule"/>
</dbReference>
<dbReference type="GO" id="GO:0008360">
    <property type="term" value="P:regulation of cell shape"/>
    <property type="evidence" value="ECO:0007669"/>
    <property type="project" value="UniProtKB-KW"/>
</dbReference>
<dbReference type="CDD" id="cd06852">
    <property type="entry name" value="GT_MraY"/>
    <property type="match status" value="1"/>
</dbReference>
<dbReference type="HAMAP" id="MF_00038">
    <property type="entry name" value="MraY"/>
    <property type="match status" value="1"/>
</dbReference>
<dbReference type="InterPro" id="IPR000715">
    <property type="entry name" value="Glycosyl_transferase_4"/>
</dbReference>
<dbReference type="InterPro" id="IPR003524">
    <property type="entry name" value="PNAcMuramoyl-5peptid_Trfase"/>
</dbReference>
<dbReference type="InterPro" id="IPR018480">
    <property type="entry name" value="PNAcMuramoyl-5peptid_Trfase_CS"/>
</dbReference>
<dbReference type="NCBIfam" id="TIGR00445">
    <property type="entry name" value="mraY"/>
    <property type="match status" value="1"/>
</dbReference>
<dbReference type="PANTHER" id="PTHR22926">
    <property type="entry name" value="PHOSPHO-N-ACETYLMURAMOYL-PENTAPEPTIDE-TRANSFERASE"/>
    <property type="match status" value="1"/>
</dbReference>
<dbReference type="PANTHER" id="PTHR22926:SF5">
    <property type="entry name" value="PHOSPHO-N-ACETYLMURAMOYL-PENTAPEPTIDE-TRANSFERASE HOMOLOG"/>
    <property type="match status" value="1"/>
</dbReference>
<dbReference type="Pfam" id="PF00953">
    <property type="entry name" value="Glycos_transf_4"/>
    <property type="match status" value="1"/>
</dbReference>
<dbReference type="PROSITE" id="PS01347">
    <property type="entry name" value="MRAY_1"/>
    <property type="match status" value="1"/>
</dbReference>
<dbReference type="PROSITE" id="PS01348">
    <property type="entry name" value="MRAY_2"/>
    <property type="match status" value="1"/>
</dbReference>
<reference key="1">
    <citation type="journal article" date="2003" name="Mol. Microbiol.">
        <title>Genome-based analysis of virulence genes in a non-biofilm-forming Staphylococcus epidermidis strain (ATCC 12228).</title>
        <authorList>
            <person name="Zhang Y.-Q."/>
            <person name="Ren S.-X."/>
            <person name="Li H.-L."/>
            <person name="Wang Y.-X."/>
            <person name="Fu G."/>
            <person name="Yang J."/>
            <person name="Qin Z.-Q."/>
            <person name="Miao Y.-G."/>
            <person name="Wang W.-Y."/>
            <person name="Chen R.-S."/>
            <person name="Shen Y."/>
            <person name="Chen Z."/>
            <person name="Yuan Z.-H."/>
            <person name="Zhao G.-P."/>
            <person name="Qu D."/>
            <person name="Danchin A."/>
            <person name="Wen Y.-M."/>
        </authorList>
    </citation>
    <scope>NUCLEOTIDE SEQUENCE [LARGE SCALE GENOMIC DNA]</scope>
    <source>
        <strain>ATCC 12228 / FDA PCI 1200</strain>
    </source>
</reference>
<accession>Q8CPK7</accession>
<keyword id="KW-0131">Cell cycle</keyword>
<keyword id="KW-0132">Cell division</keyword>
<keyword id="KW-1003">Cell membrane</keyword>
<keyword id="KW-0133">Cell shape</keyword>
<keyword id="KW-0961">Cell wall biogenesis/degradation</keyword>
<keyword id="KW-0460">Magnesium</keyword>
<keyword id="KW-0472">Membrane</keyword>
<keyword id="KW-0479">Metal-binding</keyword>
<keyword id="KW-0573">Peptidoglycan synthesis</keyword>
<keyword id="KW-0808">Transferase</keyword>
<keyword id="KW-0812">Transmembrane</keyword>
<keyword id="KW-1133">Transmembrane helix</keyword>
<evidence type="ECO:0000255" key="1">
    <source>
        <dbReference type="HAMAP-Rule" id="MF_00038"/>
    </source>
</evidence>
<feature type="chain" id="PRO_0000108897" description="Phospho-N-acetylmuramoyl-pentapeptide-transferase">
    <location>
        <begin position="1"/>
        <end position="321"/>
    </location>
</feature>
<feature type="transmembrane region" description="Helical" evidence="1">
    <location>
        <begin position="1"/>
        <end position="21"/>
    </location>
</feature>
<feature type="transmembrane region" description="Helical" evidence="1">
    <location>
        <begin position="50"/>
        <end position="70"/>
    </location>
</feature>
<feature type="transmembrane region" description="Helical" evidence="1">
    <location>
        <begin position="76"/>
        <end position="96"/>
    </location>
</feature>
<feature type="transmembrane region" description="Helical" evidence="1">
    <location>
        <begin position="112"/>
        <end position="132"/>
    </location>
</feature>
<feature type="transmembrane region" description="Helical" evidence="1">
    <location>
        <begin position="140"/>
        <end position="160"/>
    </location>
</feature>
<feature type="transmembrane region" description="Helical" evidence="1">
    <location>
        <begin position="176"/>
        <end position="196"/>
    </location>
</feature>
<feature type="transmembrane region" description="Helical" evidence="1">
    <location>
        <begin position="200"/>
        <end position="220"/>
    </location>
</feature>
<feature type="transmembrane region" description="Helical" evidence="1">
    <location>
        <begin position="225"/>
        <end position="245"/>
    </location>
</feature>
<feature type="transmembrane region" description="Helical" evidence="1">
    <location>
        <begin position="250"/>
        <end position="270"/>
    </location>
</feature>
<feature type="transmembrane region" description="Helical" evidence="1">
    <location>
        <begin position="300"/>
        <end position="320"/>
    </location>
</feature>
<protein>
    <recommendedName>
        <fullName evidence="1">Phospho-N-acetylmuramoyl-pentapeptide-transferase</fullName>
        <ecNumber evidence="1">2.7.8.13</ecNumber>
    </recommendedName>
    <alternativeName>
        <fullName evidence="1">UDP-MurNAc-pentapeptide phosphotransferase</fullName>
    </alternativeName>
</protein>
<organism>
    <name type="scientific">Staphylococcus epidermidis (strain ATCC 12228 / FDA PCI 1200)</name>
    <dbReference type="NCBI Taxonomy" id="176280"/>
    <lineage>
        <taxon>Bacteria</taxon>
        <taxon>Bacillati</taxon>
        <taxon>Bacillota</taxon>
        <taxon>Bacilli</taxon>
        <taxon>Bacillales</taxon>
        <taxon>Staphylococcaceae</taxon>
        <taxon>Staphylococcus</taxon>
    </lineage>
</organism>
<gene>
    <name evidence="1" type="primary">mraY</name>
    <name type="ordered locus">SE_0857</name>
</gene>
<name>MRAY_STAES</name>
<proteinExistence type="inferred from homology"/>
<sequence length="321" mass="35603">MIFIYAIIALLITFILVPILIPTLKRMKFGQSIREEGPQSHMKKTGTPTMGGLTFLISIIISSIIAIIFVDHSNPIILLLFVTIGFGLIGFIDDYIIVVKKNNQGLTSKQKFLAQIIIAVIFFVLSDVFHLVHFTTDLHIPFVNFDIPLSFAYVIFIVFWQVGFSNAVNLTDGLDGLATGLSIIGFAMYAVMSYMLDSPAIGIFCIIMIFALLGFLPYNLNPAKVFMGDTGSLALGGIFATISIMLNQELSLILIGFVFVVETLSVMLQVASYKLTKKRIFKMSPIHHHFELSGWGEWKVVTVFWTVGLITGLIGLWIGVH</sequence>